<keyword id="KW-0007">Acetylation</keyword>
<keyword id="KW-0012">Acyltransferase</keyword>
<keyword id="KW-0963">Cytoplasm</keyword>
<keyword id="KW-1185">Reference proteome</keyword>
<keyword id="KW-0808">Transferase</keyword>
<gene>
    <name evidence="3" type="primary">SAT2</name>
    <name evidence="5" type="synonym">SSAT2</name>
</gene>
<proteinExistence type="evidence at transcript level"/>
<organism>
    <name type="scientific">Sus scrofa</name>
    <name type="common">Pig</name>
    <dbReference type="NCBI Taxonomy" id="9823"/>
    <lineage>
        <taxon>Eukaryota</taxon>
        <taxon>Metazoa</taxon>
        <taxon>Chordata</taxon>
        <taxon>Craniata</taxon>
        <taxon>Vertebrata</taxon>
        <taxon>Euteleostomi</taxon>
        <taxon>Mammalia</taxon>
        <taxon>Eutheria</taxon>
        <taxon>Laurasiatheria</taxon>
        <taxon>Artiodactyla</taxon>
        <taxon>Suina</taxon>
        <taxon>Suidae</taxon>
        <taxon>Sus</taxon>
    </lineage>
</organism>
<dbReference type="EC" id="2.3.1.-" evidence="3"/>
<dbReference type="EC" id="2.3.1.57" evidence="3"/>
<dbReference type="EMBL" id="BF198274">
    <property type="status" value="NOT_ANNOTATED_CDS"/>
    <property type="molecule type" value="mRNA"/>
</dbReference>
<dbReference type="EMBL" id="CB470125">
    <property type="status" value="NOT_ANNOTATED_CDS"/>
    <property type="molecule type" value="mRNA"/>
</dbReference>
<dbReference type="EMBL" id="BK001358">
    <property type="protein sequence ID" value="DAA01468.1"/>
    <property type="molecule type" value="mRNA"/>
</dbReference>
<dbReference type="RefSeq" id="NP_001123434.1">
    <property type="nucleotide sequence ID" value="NM_001129962.2"/>
</dbReference>
<dbReference type="SMR" id="Q7PCJ9"/>
<dbReference type="FunCoup" id="Q7PCJ9">
    <property type="interactions" value="164"/>
</dbReference>
<dbReference type="STRING" id="9823.ENSSSCP00000070051"/>
<dbReference type="PaxDb" id="9823-ENSSSCP00000019018"/>
<dbReference type="PeptideAtlas" id="Q7PCJ9"/>
<dbReference type="Ensembl" id="ENSSSCT00000019536.5">
    <property type="protein sequence ID" value="ENSSSCP00000019018.3"/>
    <property type="gene ID" value="ENSSSCG00000017952.5"/>
</dbReference>
<dbReference type="Ensembl" id="ENSSSCT00015049048.1">
    <property type="protein sequence ID" value="ENSSSCP00015019528.1"/>
    <property type="gene ID" value="ENSSSCG00015036850.1"/>
</dbReference>
<dbReference type="Ensembl" id="ENSSSCT00035068642.1">
    <property type="protein sequence ID" value="ENSSSCP00035027778.1"/>
    <property type="gene ID" value="ENSSSCG00035051544.1"/>
</dbReference>
<dbReference type="Ensembl" id="ENSSSCT00055029955.1">
    <property type="protein sequence ID" value="ENSSSCP00055023856.1"/>
    <property type="gene ID" value="ENSSSCG00055015080.1"/>
</dbReference>
<dbReference type="Ensembl" id="ENSSSCT00065068599.1">
    <property type="protein sequence ID" value="ENSSSCP00065029864.1"/>
    <property type="gene ID" value="ENSSSCG00065050091.1"/>
</dbReference>
<dbReference type="Ensembl" id="ENSSSCT00090006967">
    <property type="protein sequence ID" value="ENSSSCP00090004201"/>
    <property type="gene ID" value="ENSSSCG00090004011"/>
</dbReference>
<dbReference type="Ensembl" id="ENSSSCT00110074629">
    <property type="protein sequence ID" value="ENSSSCP00110052731"/>
    <property type="gene ID" value="ENSSSCG00110039072"/>
</dbReference>
<dbReference type="Ensembl" id="ENSSSCT00115027638">
    <property type="protein sequence ID" value="ENSSSCP00115026199"/>
    <property type="gene ID" value="ENSSSCG00115015826"/>
</dbReference>
<dbReference type="Ensembl" id="ENSSSCT00130063970">
    <property type="protein sequence ID" value="ENSSSCP00130045821"/>
    <property type="gene ID" value="ENSSSCG00130032766"/>
</dbReference>
<dbReference type="GeneID" id="100170117"/>
<dbReference type="KEGG" id="ssc:100170117"/>
<dbReference type="CTD" id="112483"/>
<dbReference type="VGNC" id="VGNC:92586">
    <property type="gene designation" value="SAT2"/>
</dbReference>
<dbReference type="eggNOG" id="KOG3216">
    <property type="taxonomic scope" value="Eukaryota"/>
</dbReference>
<dbReference type="GeneTree" id="ENSGT00950000183121"/>
<dbReference type="InParanoid" id="Q7PCJ9"/>
<dbReference type="OMA" id="QSEWVRY"/>
<dbReference type="OrthoDB" id="7305308at2759"/>
<dbReference type="Proteomes" id="UP000008227">
    <property type="component" value="Chromosome 12"/>
</dbReference>
<dbReference type="Proteomes" id="UP000314985">
    <property type="component" value="Unplaced"/>
</dbReference>
<dbReference type="Proteomes" id="UP000694570">
    <property type="component" value="Unplaced"/>
</dbReference>
<dbReference type="Proteomes" id="UP000694571">
    <property type="component" value="Unplaced"/>
</dbReference>
<dbReference type="Proteomes" id="UP000694720">
    <property type="component" value="Unplaced"/>
</dbReference>
<dbReference type="Proteomes" id="UP000694722">
    <property type="component" value="Unplaced"/>
</dbReference>
<dbReference type="Proteomes" id="UP000694723">
    <property type="component" value="Unplaced"/>
</dbReference>
<dbReference type="Proteomes" id="UP000694724">
    <property type="component" value="Unplaced"/>
</dbReference>
<dbReference type="Proteomes" id="UP000694725">
    <property type="component" value="Unplaced"/>
</dbReference>
<dbReference type="Proteomes" id="UP000694726">
    <property type="component" value="Unplaced"/>
</dbReference>
<dbReference type="Proteomes" id="UP000694727">
    <property type="component" value="Unplaced"/>
</dbReference>
<dbReference type="Proteomes" id="UP000694728">
    <property type="component" value="Unplaced"/>
</dbReference>
<dbReference type="Bgee" id="ENSSSCG00000017952">
    <property type="expression patterns" value="Expressed in granulosa cell and 46 other cell types or tissues"/>
</dbReference>
<dbReference type="ExpressionAtlas" id="Q7PCJ9">
    <property type="expression patterns" value="baseline and differential"/>
</dbReference>
<dbReference type="GO" id="GO:0005737">
    <property type="term" value="C:cytoplasm"/>
    <property type="evidence" value="ECO:0007669"/>
    <property type="project" value="UniProtKB-SubCell"/>
</dbReference>
<dbReference type="GO" id="GO:0008080">
    <property type="term" value="F:N-acetyltransferase activity"/>
    <property type="evidence" value="ECO:0000250"/>
    <property type="project" value="UniProtKB"/>
</dbReference>
<dbReference type="CDD" id="cd04301">
    <property type="entry name" value="NAT_SF"/>
    <property type="match status" value="1"/>
</dbReference>
<dbReference type="FunFam" id="3.40.630.30:FF:000011">
    <property type="entry name" value="Diamine acetyltransferase 1"/>
    <property type="match status" value="1"/>
</dbReference>
<dbReference type="Gene3D" id="3.40.630.30">
    <property type="match status" value="1"/>
</dbReference>
<dbReference type="InterPro" id="IPR016181">
    <property type="entry name" value="Acyl_CoA_acyltransferase"/>
</dbReference>
<dbReference type="InterPro" id="IPR051016">
    <property type="entry name" value="Diverse_Substrate_AcTransf"/>
</dbReference>
<dbReference type="InterPro" id="IPR000182">
    <property type="entry name" value="GNAT_dom"/>
</dbReference>
<dbReference type="PANTHER" id="PTHR10545">
    <property type="entry name" value="DIAMINE N-ACETYLTRANSFERASE"/>
    <property type="match status" value="1"/>
</dbReference>
<dbReference type="PANTHER" id="PTHR10545:SF51">
    <property type="entry name" value="THIALYSINE N-EPSILON-ACETYLTRANSFERASE"/>
    <property type="match status" value="1"/>
</dbReference>
<dbReference type="Pfam" id="PF00583">
    <property type="entry name" value="Acetyltransf_1"/>
    <property type="match status" value="1"/>
</dbReference>
<dbReference type="SUPFAM" id="SSF55729">
    <property type="entry name" value="Acyl-CoA N-acyltransferases (Nat)"/>
    <property type="match status" value="1"/>
</dbReference>
<dbReference type="PROSITE" id="PS51186">
    <property type="entry name" value="GNAT"/>
    <property type="match status" value="1"/>
</dbReference>
<protein>
    <recommendedName>
        <fullName evidence="6">Thialysine N-epsilon-acetyltransferase</fullName>
        <ecNumber evidence="3">2.3.1.-</ecNumber>
    </recommendedName>
    <alternativeName>
        <fullName evidence="3">Diamine acetyltransferase 2</fullName>
        <ecNumber evidence="3">2.3.1.57</ecNumber>
    </alternativeName>
    <alternativeName>
        <fullName evidence="5">Spermidine/spermine N(1)-acetyltransferase 2</fullName>
        <shortName evidence="5">SSAT-2</shortName>
    </alternativeName>
</protein>
<accession>Q7PCJ9</accession>
<reference key="1">
    <citation type="submission" date="2000-11" db="EMBL/GenBank/DDBJ databases">
        <title>Design and use of two pooled tissue normalized cDNA libraries for EST discovery in swine.</title>
        <authorList>
            <person name="Fahrenkrug S.C."/>
            <person name="Freking B.A."/>
            <person name="Rohrer G.A."/>
            <person name="Smith T.P.L."/>
            <person name="Casas E."/>
            <person name="Stone R.T."/>
            <person name="Heaton M.P."/>
            <person name="Grosse W.M."/>
            <person name="Bennett G.A."/>
            <person name="Laegreid W.W."/>
            <person name="Keele J.W."/>
        </authorList>
    </citation>
    <scope>NUCLEOTIDE SEQUENCE [MRNA] OF 1-119</scope>
</reference>
<reference key="2">
    <citation type="submission" date="2003-03" db="EMBL/GenBank/DDBJ databases">
        <title>Sequence analysis of African swine fever virus infected and non-infected porcine macrophage cDNA libraries.</title>
        <authorList>
            <person name="Neilan J.G."/>
            <person name="Kutish G.F."/>
            <person name="Lu Z."/>
            <person name="Zsak A."/>
            <person name="Rock D.L."/>
        </authorList>
    </citation>
    <scope>NUCLEOTIDE SEQUENCE [MRNA] OF 55-170</scope>
</reference>
<reference key="3">
    <citation type="journal article" date="2003" name="Biochem. J.">
        <title>Genomic identification and biochemical characterization of a second spermidine/spermine N1-acetyltransferase.</title>
        <authorList>
            <person name="Chen Y."/>
            <person name="Vujcic S."/>
            <person name="Liang P."/>
            <person name="Diegelman P."/>
            <person name="Kramer D.L."/>
            <person name="Porter C.W."/>
        </authorList>
    </citation>
    <scope>IDENTIFICATION</scope>
</reference>
<comment type="function">
    <text evidence="3">Catalyzes the N-acetylation of the amino acid thialysine (S-(2-aminoethyl)-L-cysteine), a L-lysine analog with the 4-methylene group substituted with a sulfur. May also catalyze acetylation of polyamines, such as norspermidine, spermidine or spermine. However, ability to acetylate polyamines is weak, suggesting that it does not act as a diamine acetyltransferase in vivo.</text>
</comment>
<comment type="catalytic activity">
    <reaction evidence="3">
        <text>S-(2-aminoethyl)-L-cysteine + acetyl-CoA = S-(2-acetamidoethyl)-L-cysteine + CoA + H(+)</text>
        <dbReference type="Rhea" id="RHEA:64804"/>
        <dbReference type="ChEBI" id="CHEBI:15378"/>
        <dbReference type="ChEBI" id="CHEBI:57287"/>
        <dbReference type="ChEBI" id="CHEBI:57288"/>
        <dbReference type="ChEBI" id="CHEBI:156132"/>
        <dbReference type="ChEBI" id="CHEBI:156134"/>
    </reaction>
    <physiologicalReaction direction="left-to-right" evidence="3">
        <dbReference type="Rhea" id="RHEA:64805"/>
    </physiologicalReaction>
</comment>
<comment type="catalytic activity">
    <reaction evidence="3">
        <text>an alkane-alpha,omega-diamine + acetyl-CoA = an N-acetylalkane-alpha,omega-diamine + CoA + H(+)</text>
        <dbReference type="Rhea" id="RHEA:11116"/>
        <dbReference type="Rhea" id="RHEA-COMP:9766"/>
        <dbReference type="Rhea" id="RHEA-COMP:9767"/>
        <dbReference type="ChEBI" id="CHEBI:15378"/>
        <dbReference type="ChEBI" id="CHEBI:57287"/>
        <dbReference type="ChEBI" id="CHEBI:57288"/>
        <dbReference type="ChEBI" id="CHEBI:70977"/>
        <dbReference type="ChEBI" id="CHEBI:70988"/>
        <dbReference type="EC" id="2.3.1.57"/>
    </reaction>
</comment>
<comment type="subunit">
    <text evidence="3">Homodimer.</text>
</comment>
<comment type="subcellular location">
    <subcellularLocation>
        <location evidence="3">Cytoplasm</location>
    </subcellularLocation>
    <text evidence="3">Intracellular organelles.</text>
</comment>
<comment type="similarity">
    <text evidence="6">Belongs to the acetyltransferase family.</text>
</comment>
<sequence length="170" mass="19171">MASVLIREAKEGDCGNILRMIRELAEYEKLSDQVKISEEALRADGFGENPFFHCLVAEILPAPGEPQGSCMVGYGLYYFIYSTWTGRNIYLEDIYVKPEYRGQGIGSKIIKKVAEVALDKGCSQFRLAVLDWNKKAVDLYKTLGARDLTEAEGWHSFRFEGEAMRELAGK</sequence>
<feature type="chain" id="PRO_0000074600" description="Thialysine N-epsilon-acetyltransferase">
    <location>
        <begin position="1"/>
        <end position="170"/>
    </location>
</feature>
<feature type="domain" description="N-acetyltransferase" evidence="4">
    <location>
        <begin position="4"/>
        <end position="166"/>
    </location>
</feature>
<feature type="active site" description="Proton donor" evidence="1">
    <location>
        <position position="140"/>
    </location>
</feature>
<feature type="binding site" evidence="2">
    <location>
        <begin position="27"/>
        <end position="28"/>
    </location>
    <ligand>
        <name>substrate</name>
    </ligand>
</feature>
<feature type="binding site" evidence="2">
    <location>
        <position position="92"/>
    </location>
    <ligand>
        <name>substrate</name>
    </ligand>
</feature>
<feature type="binding site" evidence="3">
    <location>
        <begin position="94"/>
        <end position="96"/>
    </location>
    <ligand>
        <name>acetyl-CoA</name>
        <dbReference type="ChEBI" id="CHEBI:57288"/>
    </ligand>
</feature>
<feature type="binding site" evidence="3">
    <location>
        <begin position="102"/>
        <end position="107"/>
    </location>
    <ligand>
        <name>acetyl-CoA</name>
        <dbReference type="ChEBI" id="CHEBI:57288"/>
    </ligand>
</feature>
<feature type="binding site" evidence="3">
    <location>
        <begin position="133"/>
        <end position="135"/>
    </location>
    <ligand>
        <name>acetyl-CoA</name>
        <dbReference type="ChEBI" id="CHEBI:57288"/>
    </ligand>
</feature>
<feature type="binding site" evidence="3">
    <location>
        <position position="140"/>
    </location>
    <ligand>
        <name>acetyl-CoA</name>
        <dbReference type="ChEBI" id="CHEBI:57288"/>
    </ligand>
</feature>
<feature type="binding site" evidence="2">
    <location>
        <position position="152"/>
    </location>
    <ligand>
        <name>substrate</name>
    </ligand>
</feature>
<feature type="modified residue" description="N6-acetyllysine" evidence="3">
    <location>
        <position position="29"/>
    </location>
</feature>
<name>SAT2_PIG</name>
<evidence type="ECO:0000250" key="1">
    <source>
        <dbReference type="UniProtKB" id="P0A951"/>
    </source>
</evidence>
<evidence type="ECO:0000250" key="2">
    <source>
        <dbReference type="UniProtKB" id="P21673"/>
    </source>
</evidence>
<evidence type="ECO:0000250" key="3">
    <source>
        <dbReference type="UniProtKB" id="Q96F10"/>
    </source>
</evidence>
<evidence type="ECO:0000255" key="4">
    <source>
        <dbReference type="PROSITE-ProRule" id="PRU00532"/>
    </source>
</evidence>
<evidence type="ECO:0000303" key="5">
    <source>
    </source>
</evidence>
<evidence type="ECO:0000305" key="6"/>